<proteinExistence type="evidence at protein level"/>
<organism>
    <name type="scientific">Perodicticus potto edwarsi</name>
    <name type="common">Potto</name>
    <dbReference type="NCBI Taxonomy" id="9473"/>
    <lineage>
        <taxon>Eukaryota</taxon>
        <taxon>Metazoa</taxon>
        <taxon>Chordata</taxon>
        <taxon>Craniata</taxon>
        <taxon>Vertebrata</taxon>
        <taxon>Euteleostomi</taxon>
        <taxon>Mammalia</taxon>
        <taxon>Eutheria</taxon>
        <taxon>Euarchontoglires</taxon>
        <taxon>Primates</taxon>
        <taxon>Strepsirrhini</taxon>
        <taxon>Lorisiformes</taxon>
        <taxon>Lorisidae</taxon>
        <taxon>Perodicticus</taxon>
    </lineage>
</organism>
<dbReference type="PIR" id="A02898">
    <property type="entry name" value="CYLPAA"/>
</dbReference>
<dbReference type="SMR" id="P68286"/>
<dbReference type="GlyCosmos" id="P68286">
    <property type="glycosylation" value="1 site, No reported glycans"/>
</dbReference>
<dbReference type="GO" id="GO:0005737">
    <property type="term" value="C:cytoplasm"/>
    <property type="evidence" value="ECO:0000250"/>
    <property type="project" value="UniProtKB"/>
</dbReference>
<dbReference type="GO" id="GO:0005634">
    <property type="term" value="C:nucleus"/>
    <property type="evidence" value="ECO:0000250"/>
    <property type="project" value="UniProtKB"/>
</dbReference>
<dbReference type="GO" id="GO:0046872">
    <property type="term" value="F:metal ion binding"/>
    <property type="evidence" value="ECO:0007669"/>
    <property type="project" value="UniProtKB-KW"/>
</dbReference>
<dbReference type="GO" id="GO:0005212">
    <property type="term" value="F:structural constituent of eye lens"/>
    <property type="evidence" value="ECO:0007669"/>
    <property type="project" value="UniProtKB-KW"/>
</dbReference>
<dbReference type="GO" id="GO:0051082">
    <property type="term" value="F:unfolded protein binding"/>
    <property type="evidence" value="ECO:0007669"/>
    <property type="project" value="TreeGrafter"/>
</dbReference>
<dbReference type="GO" id="GO:0002088">
    <property type="term" value="P:lens development in camera-type eye"/>
    <property type="evidence" value="ECO:0007669"/>
    <property type="project" value="TreeGrafter"/>
</dbReference>
<dbReference type="GO" id="GO:0043066">
    <property type="term" value="P:negative regulation of apoptotic process"/>
    <property type="evidence" value="ECO:0007669"/>
    <property type="project" value="TreeGrafter"/>
</dbReference>
<dbReference type="GO" id="GO:0042026">
    <property type="term" value="P:protein refolding"/>
    <property type="evidence" value="ECO:0007669"/>
    <property type="project" value="TreeGrafter"/>
</dbReference>
<dbReference type="GO" id="GO:0009408">
    <property type="term" value="P:response to heat"/>
    <property type="evidence" value="ECO:0007669"/>
    <property type="project" value="TreeGrafter"/>
</dbReference>
<dbReference type="FunFam" id="2.60.40.790:FF:000008">
    <property type="entry name" value="Alpha-crystallin A chain"/>
    <property type="match status" value="1"/>
</dbReference>
<dbReference type="Gene3D" id="2.60.40.790">
    <property type="match status" value="1"/>
</dbReference>
<dbReference type="InterPro" id="IPR002068">
    <property type="entry name" value="A-crystallin/Hsp20_dom"/>
</dbReference>
<dbReference type="InterPro" id="IPR055269">
    <property type="entry name" value="Alpha-crystallin/HSP_16"/>
</dbReference>
<dbReference type="InterPro" id="IPR001436">
    <property type="entry name" value="Alpha-crystallin/sHSP_animal"/>
</dbReference>
<dbReference type="InterPro" id="IPR003090">
    <property type="entry name" value="Alpha-crystallin_N"/>
</dbReference>
<dbReference type="InterPro" id="IPR008978">
    <property type="entry name" value="HSP20-like_chaperone"/>
</dbReference>
<dbReference type="PANTHER" id="PTHR45640:SF14">
    <property type="entry name" value="ALPHA-CRYSTALLIN A CHAIN"/>
    <property type="match status" value="1"/>
</dbReference>
<dbReference type="PANTHER" id="PTHR45640">
    <property type="entry name" value="HEAT SHOCK PROTEIN HSP-12.2-RELATED"/>
    <property type="match status" value="1"/>
</dbReference>
<dbReference type="Pfam" id="PF00525">
    <property type="entry name" value="Crystallin"/>
    <property type="match status" value="1"/>
</dbReference>
<dbReference type="Pfam" id="PF00011">
    <property type="entry name" value="HSP20"/>
    <property type="match status" value="1"/>
</dbReference>
<dbReference type="PIRSF" id="PIRSF036514">
    <property type="entry name" value="Sm_HSP_B1"/>
    <property type="match status" value="1"/>
</dbReference>
<dbReference type="PRINTS" id="PR00299">
    <property type="entry name" value="ACRYSTALLIN"/>
</dbReference>
<dbReference type="SUPFAM" id="SSF49764">
    <property type="entry name" value="HSP20-like chaperones"/>
    <property type="match status" value="1"/>
</dbReference>
<dbReference type="PROSITE" id="PS01031">
    <property type="entry name" value="SHSP"/>
    <property type="match status" value="1"/>
</dbReference>
<comment type="function">
    <text evidence="4">Contributes to the transparency and refractive index of the lens. Acts as a chaperone, preventing aggregation of various proteins under a wide range of stress conditions. Required for the correct formation of lens intermediate filaments as part of a complex composed of BFSP1, BFSP2 and CRYAA.</text>
</comment>
<comment type="subunit">
    <text evidence="2 4">Heteromer composed of three CRYAA and one CRYAB subunits. Inter-subunit bridging via zinc ions enhances stability, which is crucial as there is no protein turn over in the lens. Can also form homodimers and homotetramers (dimers of dimers) which serve as the building blocks of homooligomers (By similarity). Within homooligomers, the zinc-binding motif is created from residues of 3 different molecules. His-100 and Glu-102 from one molecule are ligands of the zinc ion, and His-107 and His-154 residues from additional molecules complete the site with tetrahedral coordination geometry (By similarity). Part of a complex required for lens intermediate filament formation composed of BFSP1, BFSP2 and CRYAA (By similarity).</text>
</comment>
<comment type="subcellular location">
    <subcellularLocation>
        <location evidence="4">Cytoplasm</location>
    </subcellularLocation>
    <subcellularLocation>
        <location evidence="4">Nucleus</location>
    </subcellularLocation>
    <text evidence="4">Translocates to the nucleus during heat shock and resides in sub-nuclear structures known as SC35 speckles or nuclear splicing speckles.</text>
</comment>
<comment type="PTM">
    <text evidence="4">Acetylation at Lys-70 may increase chaperone activity.</text>
</comment>
<comment type="PTM">
    <text evidence="4">Undergoes age-dependent proteolytical cleavage at the C-terminus.</text>
</comment>
<comment type="similarity">
    <text evidence="5">Belongs to the small heat shock protein (HSP20) family.</text>
</comment>
<feature type="chain" id="PRO_0000125877" description="Alpha-crystallin A chain">
    <location>
        <begin position="1"/>
        <end position="173"/>
    </location>
</feature>
<feature type="domain" description="sHSP" evidence="5">
    <location>
        <begin position="52"/>
        <end position="162"/>
    </location>
</feature>
<feature type="region of interest" description="Required for complex formation with BFSP1 and BFSP2" evidence="4">
    <location>
        <begin position="1"/>
        <end position="63"/>
    </location>
</feature>
<feature type="region of interest" description="Disordered" evidence="6">
    <location>
        <begin position="144"/>
        <end position="173"/>
    </location>
</feature>
<feature type="compositionally biased region" description="Basic and acidic residues" evidence="6">
    <location>
        <begin position="153"/>
        <end position="167"/>
    </location>
</feature>
<feature type="binding site" evidence="2">
    <location>
        <position position="100"/>
    </location>
    <ligand>
        <name>Zn(2+)</name>
        <dbReference type="ChEBI" id="CHEBI:29105"/>
        <label>1</label>
    </ligand>
</feature>
<feature type="binding site" evidence="2">
    <location>
        <position position="102"/>
    </location>
    <ligand>
        <name>Zn(2+)</name>
        <dbReference type="ChEBI" id="CHEBI:29105"/>
        <label>1</label>
    </ligand>
</feature>
<feature type="binding site" evidence="2">
    <location>
        <position position="107"/>
    </location>
    <ligand>
        <name>Zn(2+)</name>
        <dbReference type="ChEBI" id="CHEBI:29105"/>
        <label>2</label>
    </ligand>
</feature>
<feature type="binding site" evidence="2">
    <location>
        <position position="154"/>
    </location>
    <ligand>
        <name>Zn(2+)</name>
        <dbReference type="ChEBI" id="CHEBI:29105"/>
        <label>3</label>
    </ligand>
</feature>
<feature type="modified residue" description="N-acetylmethionine" evidence="3 7">
    <location>
        <position position="1"/>
    </location>
</feature>
<feature type="modified residue" description="Deamidated glutamine; partial" evidence="1">
    <location>
        <position position="6"/>
    </location>
</feature>
<feature type="modified residue" description="Phosphoserine" evidence="4">
    <location>
        <position position="45"/>
    </location>
</feature>
<feature type="modified residue" description="Deamidated glutamine; partial" evidence="1">
    <location>
        <position position="50"/>
    </location>
</feature>
<feature type="modified residue" description="N6-acetyllysine" evidence="4">
    <location>
        <position position="70"/>
    </location>
</feature>
<feature type="modified residue" description="Deamidated glutamine; partial" evidence="1">
    <location>
        <position position="90"/>
    </location>
</feature>
<feature type="modified residue" description="N6-acetyllysine" evidence="4">
    <location>
        <position position="99"/>
    </location>
</feature>
<feature type="modified residue" description="Deamidated asparagine; partial" evidence="1">
    <location>
        <position position="101"/>
    </location>
</feature>
<feature type="modified residue" description="Phosphoserine" evidence="2">
    <location>
        <position position="122"/>
    </location>
</feature>
<feature type="modified residue" description="Deamidated asparagine; partial" evidence="1">
    <location>
        <position position="123"/>
    </location>
</feature>
<feature type="modified residue" description="Deamidated glutamine; partial" evidence="1">
    <location>
        <position position="147"/>
    </location>
</feature>
<feature type="glycosylation site" description="O-linked (GlcNAc) serine" evidence="1">
    <location>
        <position position="162"/>
    </location>
</feature>
<evidence type="ECO:0000250" key="1"/>
<evidence type="ECO:0000250" key="2">
    <source>
        <dbReference type="UniProtKB" id="P02470"/>
    </source>
</evidence>
<evidence type="ECO:0000250" key="3">
    <source>
        <dbReference type="UniProtKB" id="P02474"/>
    </source>
</evidence>
<evidence type="ECO:0000250" key="4">
    <source>
        <dbReference type="UniProtKB" id="P02489"/>
    </source>
</evidence>
<evidence type="ECO:0000255" key="5">
    <source>
        <dbReference type="PROSITE-ProRule" id="PRU00285"/>
    </source>
</evidence>
<evidence type="ECO:0000256" key="6">
    <source>
        <dbReference type="SAM" id="MobiDB-lite"/>
    </source>
</evidence>
<evidence type="ECO:0000305" key="7"/>
<keyword id="KW-0007">Acetylation</keyword>
<keyword id="KW-0143">Chaperone</keyword>
<keyword id="KW-0963">Cytoplasm</keyword>
<keyword id="KW-0903">Direct protein sequencing</keyword>
<keyword id="KW-0273">Eye lens protein</keyword>
<keyword id="KW-0325">Glycoprotein</keyword>
<keyword id="KW-0479">Metal-binding</keyword>
<keyword id="KW-0488">Methylation</keyword>
<keyword id="KW-0539">Nucleus</keyword>
<keyword id="KW-0597">Phosphoprotein</keyword>
<keyword id="KW-0862">Zinc</keyword>
<sequence>MDVTIQHPWFKRPLGPFYPSRLFDQFFGEGLFEYDLLPFLSSTISPYYRQSLFRTVLDSGVSEVRSDRDKFVIFLDVKHFSPEDLTVKVQEDFVEIHGKHNERQDDHGYISREFHRRYRLPSNVDQSALSCSVSADGMLTFSGPKVQSGLDAGHSERAIPVSREEKPSSAPSS</sequence>
<reference key="1">
    <citation type="book" date="1980" name="Protides of the biological fluids, Proc. 28th colloquium">
        <title>Trends in the molecular evolution of alpha-crystallin.</title>
        <editorList>
            <person name="Peeters H."/>
        </editorList>
        <authorList>
            <person name="de Jong W.W."/>
            <person name="Zweers A."/>
            <person name="Goodman M."/>
        </authorList>
    </citation>
    <scope>PROTEIN SEQUENCE</scope>
</reference>
<accession>P68286</accession>
<accession>P02495</accession>
<name>CRYAA_PERPO</name>
<gene>
    <name type="primary">CRYAA</name>
</gene>
<protein>
    <recommendedName>
        <fullName>Alpha-crystallin A chain</fullName>
    </recommendedName>
</protein>